<reference key="1">
    <citation type="journal article" date="2006" name="Proc. Natl. Acad. Sci. U.S.A.">
        <title>The complete genome sequence of a chronic atrophic gastritis Helicobacter pylori strain: evolution during disease progression.</title>
        <authorList>
            <person name="Oh J.D."/>
            <person name="Kling-Baeckhed H."/>
            <person name="Giannakis M."/>
            <person name="Xu J."/>
            <person name="Fulton R.S."/>
            <person name="Fulton L.A."/>
            <person name="Cordum H.S."/>
            <person name="Wang C."/>
            <person name="Elliott G."/>
            <person name="Edwards J."/>
            <person name="Mardis E.R."/>
            <person name="Engstrand L.G."/>
            <person name="Gordon J.I."/>
        </authorList>
    </citation>
    <scope>NUCLEOTIDE SEQUENCE [LARGE SCALE GENOMIC DNA]</scope>
    <source>
        <strain>HPAG1</strain>
    </source>
</reference>
<protein>
    <recommendedName>
        <fullName evidence="1">4-diphosphocytidyl-2-C-methyl-D-erythritol kinase</fullName>
        <shortName evidence="1">CMK</shortName>
        <ecNumber evidence="1">2.7.1.148</ecNumber>
    </recommendedName>
    <alternativeName>
        <fullName evidence="1">4-(cytidine-5'-diphospho)-2-C-methyl-D-erythritol kinase</fullName>
    </alternativeName>
</protein>
<comment type="function">
    <text evidence="1">Catalyzes the phosphorylation of the position 2 hydroxy group of 4-diphosphocytidyl-2C-methyl-D-erythritol.</text>
</comment>
<comment type="catalytic activity">
    <reaction evidence="1">
        <text>4-CDP-2-C-methyl-D-erythritol + ATP = 4-CDP-2-C-methyl-D-erythritol 2-phosphate + ADP + H(+)</text>
        <dbReference type="Rhea" id="RHEA:18437"/>
        <dbReference type="ChEBI" id="CHEBI:15378"/>
        <dbReference type="ChEBI" id="CHEBI:30616"/>
        <dbReference type="ChEBI" id="CHEBI:57823"/>
        <dbReference type="ChEBI" id="CHEBI:57919"/>
        <dbReference type="ChEBI" id="CHEBI:456216"/>
        <dbReference type="EC" id="2.7.1.148"/>
    </reaction>
</comment>
<comment type="pathway">
    <text evidence="1">Isoprenoid biosynthesis; isopentenyl diphosphate biosynthesis via DXP pathway; isopentenyl diphosphate from 1-deoxy-D-xylulose 5-phosphate: step 3/6.</text>
</comment>
<comment type="similarity">
    <text evidence="1">Belongs to the GHMP kinase family. IspE subfamily.</text>
</comment>
<dbReference type="EC" id="2.7.1.148" evidence="1"/>
<dbReference type="EMBL" id="CP000241">
    <property type="protein sequence ID" value="ABF85436.1"/>
    <property type="molecule type" value="Genomic_DNA"/>
</dbReference>
<dbReference type="RefSeq" id="WP_011550130.1">
    <property type="nucleotide sequence ID" value="NC_008086.1"/>
</dbReference>
<dbReference type="SMR" id="Q1CRI6"/>
<dbReference type="KEGG" id="hpa:HPAG1_1369"/>
<dbReference type="HOGENOM" id="CLU_053057_2_2_7"/>
<dbReference type="UniPathway" id="UPA00056">
    <property type="reaction ID" value="UER00094"/>
</dbReference>
<dbReference type="GO" id="GO:0050515">
    <property type="term" value="F:4-(cytidine 5'-diphospho)-2-C-methyl-D-erythritol kinase activity"/>
    <property type="evidence" value="ECO:0007669"/>
    <property type="project" value="UniProtKB-UniRule"/>
</dbReference>
<dbReference type="GO" id="GO:0005524">
    <property type="term" value="F:ATP binding"/>
    <property type="evidence" value="ECO:0007669"/>
    <property type="project" value="UniProtKB-UniRule"/>
</dbReference>
<dbReference type="GO" id="GO:0019288">
    <property type="term" value="P:isopentenyl diphosphate biosynthetic process, methylerythritol 4-phosphate pathway"/>
    <property type="evidence" value="ECO:0007669"/>
    <property type="project" value="UniProtKB-UniRule"/>
</dbReference>
<dbReference type="GO" id="GO:0016114">
    <property type="term" value="P:terpenoid biosynthetic process"/>
    <property type="evidence" value="ECO:0007669"/>
    <property type="project" value="InterPro"/>
</dbReference>
<dbReference type="Gene3D" id="3.30.230.10">
    <property type="match status" value="1"/>
</dbReference>
<dbReference type="Gene3D" id="3.30.70.890">
    <property type="entry name" value="GHMP kinase, C-terminal domain"/>
    <property type="match status" value="1"/>
</dbReference>
<dbReference type="HAMAP" id="MF_00061">
    <property type="entry name" value="IspE"/>
    <property type="match status" value="1"/>
</dbReference>
<dbReference type="InterPro" id="IPR036554">
    <property type="entry name" value="GHMP_kinase_C_sf"/>
</dbReference>
<dbReference type="InterPro" id="IPR006204">
    <property type="entry name" value="GHMP_kinase_N_dom"/>
</dbReference>
<dbReference type="InterPro" id="IPR004424">
    <property type="entry name" value="IspE"/>
</dbReference>
<dbReference type="InterPro" id="IPR020568">
    <property type="entry name" value="Ribosomal_Su5_D2-typ_SF"/>
</dbReference>
<dbReference type="InterPro" id="IPR014721">
    <property type="entry name" value="Ribsml_uS5_D2-typ_fold_subgr"/>
</dbReference>
<dbReference type="NCBIfam" id="TIGR00154">
    <property type="entry name" value="ispE"/>
    <property type="match status" value="1"/>
</dbReference>
<dbReference type="NCBIfam" id="NF003216">
    <property type="entry name" value="PRK04181.1"/>
    <property type="match status" value="1"/>
</dbReference>
<dbReference type="PANTHER" id="PTHR43527">
    <property type="entry name" value="4-DIPHOSPHOCYTIDYL-2-C-METHYL-D-ERYTHRITOL KINASE, CHLOROPLASTIC"/>
    <property type="match status" value="1"/>
</dbReference>
<dbReference type="PANTHER" id="PTHR43527:SF2">
    <property type="entry name" value="4-DIPHOSPHOCYTIDYL-2-C-METHYL-D-ERYTHRITOL KINASE, CHLOROPLASTIC"/>
    <property type="match status" value="1"/>
</dbReference>
<dbReference type="Pfam" id="PF00288">
    <property type="entry name" value="GHMP_kinases_N"/>
    <property type="match status" value="1"/>
</dbReference>
<dbReference type="PIRSF" id="PIRSF010376">
    <property type="entry name" value="IspE"/>
    <property type="match status" value="1"/>
</dbReference>
<dbReference type="SUPFAM" id="SSF55060">
    <property type="entry name" value="GHMP Kinase, C-terminal domain"/>
    <property type="match status" value="1"/>
</dbReference>
<dbReference type="SUPFAM" id="SSF54211">
    <property type="entry name" value="Ribosomal protein S5 domain 2-like"/>
    <property type="match status" value="1"/>
</dbReference>
<evidence type="ECO:0000255" key="1">
    <source>
        <dbReference type="HAMAP-Rule" id="MF_00061"/>
    </source>
</evidence>
<accession>Q1CRI6</accession>
<proteinExistence type="inferred from homology"/>
<gene>
    <name evidence="1" type="primary">ispE</name>
    <name type="ordered locus">HPAG1_1369</name>
</gene>
<feature type="chain" id="PRO_1000007856" description="4-diphosphocytidyl-2-C-methyl-D-erythritol kinase">
    <location>
        <begin position="1"/>
        <end position="274"/>
    </location>
</feature>
<feature type="active site" evidence="1">
    <location>
        <position position="10"/>
    </location>
</feature>
<feature type="active site" evidence="1">
    <location>
        <position position="143"/>
    </location>
</feature>
<feature type="binding site" evidence="1">
    <location>
        <begin position="101"/>
        <end position="111"/>
    </location>
    <ligand>
        <name>ATP</name>
        <dbReference type="ChEBI" id="CHEBI:30616"/>
    </ligand>
</feature>
<keyword id="KW-0067">ATP-binding</keyword>
<keyword id="KW-0414">Isoprene biosynthesis</keyword>
<keyword id="KW-0418">Kinase</keyword>
<keyword id="KW-0547">Nucleotide-binding</keyword>
<keyword id="KW-0808">Transferase</keyword>
<name>ISPE_HELPH</name>
<sequence length="274" mass="30986">MMHVFEVYPKVNIFLKILHKEGAYHKLISRMCLVKDKLKDIISVKSALSFSLKGDFDCPLEENSLFKALQILKNFLKSKNFSHSAIKSLDTLAIEVEKNIPTQAGLGGGSADAGGLLYHLNHIFDWRLSLEELYSMGSLVGADTNFFISQHKSANATSYGEVIENFEEEPLENRLEIYAPNHVFCSTKAIYQAYKPETCFSQTKEWLKKPSLECLKTCDRSELNDLLKPALLTNQALRDIESELGKEWFFSGSGSAFFRLKNTQKGANETHCQQ</sequence>
<organism>
    <name type="scientific">Helicobacter pylori (strain HPAG1)</name>
    <dbReference type="NCBI Taxonomy" id="357544"/>
    <lineage>
        <taxon>Bacteria</taxon>
        <taxon>Pseudomonadati</taxon>
        <taxon>Campylobacterota</taxon>
        <taxon>Epsilonproteobacteria</taxon>
        <taxon>Campylobacterales</taxon>
        <taxon>Helicobacteraceae</taxon>
        <taxon>Helicobacter</taxon>
    </lineage>
</organism>